<keyword id="KW-0997">Cell inner membrane</keyword>
<keyword id="KW-1003">Cell membrane</keyword>
<keyword id="KW-0472">Membrane</keyword>
<keyword id="KW-0762">Sugar transport</keyword>
<keyword id="KW-0812">Transmembrane</keyword>
<keyword id="KW-1133">Transmembrane helix</keyword>
<keyword id="KW-0813">Transport</keyword>
<reference key="1">
    <citation type="journal article" date="2005" name="J. Bacteriol.">
        <title>Genomic sequence of an otitis media isolate of nontypeable Haemophilus influenzae: comparative study with H. influenzae serotype d, strain KW20.</title>
        <authorList>
            <person name="Harrison A."/>
            <person name="Dyer D.W."/>
            <person name="Gillaspy A."/>
            <person name="Ray W.C."/>
            <person name="Mungur R."/>
            <person name="Carson M.B."/>
            <person name="Zhong H."/>
            <person name="Gipson J."/>
            <person name="Gipson M."/>
            <person name="Johnson L.S."/>
            <person name="Lewis L."/>
            <person name="Bakaletz L.O."/>
            <person name="Munson R.S. Jr."/>
        </authorList>
    </citation>
    <scope>NUCLEOTIDE SEQUENCE [LARGE SCALE GENOMIC DNA]</scope>
    <source>
        <strain>86-028NP</strain>
    </source>
</reference>
<proteinExistence type="inferred from homology"/>
<sequence length="616" mass="67739">MKYINKLEEWLGGTLFIAIFGILIAQILSRQVFHSPLIWSEELAKLLFVYVGMLGISVAVRKQEHVFIDFLTNLMPEKIRKFTNTFVQLLVFVCIFLFIHFGIRTFNDASFPIDALGGISEKWIFAALPVIAILMMFRFIQAQTINFKTGKSYLPATFFIISAVILFAILFFAPDWFKVLRISNYIKLGSSSVYIALLVWLIIMFIGVPVGWSLFIATLLYFSMTRWNVVNAATEKLVYSLDSFPLLAVPFYILTGILMNTGGITERIFNFAKSLLGHYTGGMGHVNIGASLLFSGMSGSALADAGGLGQLEIKAMRDAGYDDDICGGITAASCIIGPLVPPSIAMIIYGVIANESIAKLFIAGFIPGVLITLALMAMNYRIAKKRGYPRTPKATREQLCSSFKQSFWAILTPLLIIGGIFSGLFSPTESAIVAAAYSIIIGKFVYKELTLKTLFNSCIEAMAITGVVALMIMTVTFFGDMIAREQVAMRVADVFVAVADSPLTVLVMINALLLFLGMFIDALALQFLVLPMLIPIAMQFNIDLIFFGVMTTLNMMIGILTPPMGMALFVVARVGNMSVSTVTKGVLPFLIPVFVTLVLITIFPQIITFVPNLLIP</sequence>
<name>SIAT_HAEI8</name>
<comment type="function">
    <text evidence="1">Part of the tripartite ATP-independent periplasmic (TRAP) transport system SiaPT involved in the uptake of sialic acid.</text>
</comment>
<comment type="subunit">
    <text evidence="1">The complex comprises the extracytoplasmic solute receptor protein SiaP, and the fused transmembrane protein SiaT.</text>
</comment>
<comment type="subcellular location">
    <subcellularLocation>
        <location evidence="3">Cell inner membrane</location>
        <topology evidence="3">Multi-pass membrane protein</topology>
    </subcellularLocation>
</comment>
<comment type="similarity">
    <text evidence="3">In the N-terminal section; belongs to the TRAP transporter small permease family.</text>
</comment>
<comment type="similarity">
    <text evidence="3">In the C-terminal section; belongs to the TRAP transporter large permease family.</text>
</comment>
<protein>
    <recommendedName>
        <fullName>Sialic acid TRAP transporter permease protein SiaT</fullName>
    </recommendedName>
    <alternativeName>
        <fullName>N-acetylneuraminic acid permease</fullName>
    </alternativeName>
    <alternativeName>
        <fullName>N-acetylneuraminic acid transporter</fullName>
    </alternativeName>
    <alternativeName>
        <fullName>Neu5Ac permease</fullName>
    </alternativeName>
</protein>
<dbReference type="EMBL" id="CP000057">
    <property type="protein sequence ID" value="AAX87207.1"/>
    <property type="molecule type" value="Genomic_DNA"/>
</dbReference>
<dbReference type="RefSeq" id="WP_011271902.1">
    <property type="nucleotide sequence ID" value="NC_007146.2"/>
</dbReference>
<dbReference type="SMR" id="Q4QP40"/>
<dbReference type="KEGG" id="hit:NTHI0234"/>
<dbReference type="HOGENOM" id="CLU_019824_4_1_6"/>
<dbReference type="Proteomes" id="UP000002525">
    <property type="component" value="Chromosome"/>
</dbReference>
<dbReference type="GO" id="GO:0005886">
    <property type="term" value="C:plasma membrane"/>
    <property type="evidence" value="ECO:0007669"/>
    <property type="project" value="UniProtKB-SubCell"/>
</dbReference>
<dbReference type="GO" id="GO:0022857">
    <property type="term" value="F:transmembrane transporter activity"/>
    <property type="evidence" value="ECO:0007669"/>
    <property type="project" value="TreeGrafter"/>
</dbReference>
<dbReference type="InterPro" id="IPR010656">
    <property type="entry name" value="DctM"/>
</dbReference>
<dbReference type="InterPro" id="IPR055348">
    <property type="entry name" value="DctQ"/>
</dbReference>
<dbReference type="InterPro" id="IPR004681">
    <property type="entry name" value="TRAP_DctM"/>
</dbReference>
<dbReference type="NCBIfam" id="TIGR00786">
    <property type="entry name" value="dctM"/>
    <property type="match status" value="1"/>
</dbReference>
<dbReference type="PANTHER" id="PTHR33362:SF3">
    <property type="entry name" value="SIALIC ACID TRAP TRANSPORTER PERMEASE PROTEIN SIAT"/>
    <property type="match status" value="1"/>
</dbReference>
<dbReference type="PANTHER" id="PTHR33362">
    <property type="entry name" value="SIALIC ACID TRAP TRANSPORTER PERMEASE PROTEIN SIAT-RELATED"/>
    <property type="match status" value="1"/>
</dbReference>
<dbReference type="Pfam" id="PF06808">
    <property type="entry name" value="DctM"/>
    <property type="match status" value="1"/>
</dbReference>
<dbReference type="Pfam" id="PF04290">
    <property type="entry name" value="DctQ"/>
    <property type="match status" value="1"/>
</dbReference>
<evidence type="ECO:0000250" key="1"/>
<evidence type="ECO:0000255" key="2"/>
<evidence type="ECO:0000305" key="3"/>
<gene>
    <name type="primary">siaT</name>
    <name type="ordered locus">NTHI0234</name>
</gene>
<feature type="chain" id="PRO_0000238447" description="Sialic acid TRAP transporter permease protein SiaT">
    <location>
        <begin position="1"/>
        <end position="616"/>
    </location>
</feature>
<feature type="transmembrane region" description="Helical" evidence="2">
    <location>
        <begin position="9"/>
        <end position="29"/>
    </location>
</feature>
<feature type="transmembrane region" description="Helical" evidence="2">
    <location>
        <begin position="36"/>
        <end position="56"/>
    </location>
</feature>
<feature type="transmembrane region" description="Helical" evidence="2">
    <location>
        <begin position="83"/>
        <end position="103"/>
    </location>
</feature>
<feature type="transmembrane region" description="Helical" evidence="2">
    <location>
        <begin position="117"/>
        <end position="137"/>
    </location>
</feature>
<feature type="transmembrane region" description="Helical" evidence="2">
    <location>
        <begin position="153"/>
        <end position="173"/>
    </location>
</feature>
<feature type="transmembrane region" description="Helical" evidence="2">
    <location>
        <begin position="195"/>
        <end position="215"/>
    </location>
</feature>
<feature type="transmembrane region" description="Helical" evidence="2">
    <location>
        <begin position="244"/>
        <end position="264"/>
    </location>
</feature>
<feature type="transmembrane region" description="Helical" evidence="2">
    <location>
        <begin position="288"/>
        <end position="308"/>
    </location>
</feature>
<feature type="transmembrane region" description="Helical" evidence="2">
    <location>
        <begin position="332"/>
        <end position="352"/>
    </location>
</feature>
<feature type="transmembrane region" description="Helical" evidence="2">
    <location>
        <begin position="357"/>
        <end position="377"/>
    </location>
</feature>
<feature type="transmembrane region" description="Helical" evidence="2">
    <location>
        <begin position="407"/>
        <end position="427"/>
    </location>
</feature>
<feature type="transmembrane region" description="Helical" evidence="2">
    <location>
        <begin position="431"/>
        <end position="451"/>
    </location>
</feature>
<feature type="transmembrane region" description="Helical" evidence="2">
    <location>
        <begin position="459"/>
        <end position="479"/>
    </location>
</feature>
<feature type="transmembrane region" description="Helical" evidence="2">
    <location>
        <begin position="505"/>
        <end position="525"/>
    </location>
</feature>
<feature type="transmembrane region" description="Helical" evidence="2">
    <location>
        <begin position="527"/>
        <end position="547"/>
    </location>
</feature>
<feature type="transmembrane region" description="Helical" evidence="2">
    <location>
        <begin position="552"/>
        <end position="572"/>
    </location>
</feature>
<feature type="transmembrane region" description="Helical" evidence="2">
    <location>
        <begin position="587"/>
        <end position="607"/>
    </location>
</feature>
<feature type="region of interest" description="TRAP transporter small permease">
    <location>
        <begin position="1"/>
        <end position="190"/>
    </location>
</feature>
<feature type="region of interest" description="TRAP transporter large permease">
    <location>
        <begin position="191"/>
        <end position="616"/>
    </location>
</feature>
<accession>Q4QP40</accession>
<organism>
    <name type="scientific">Haemophilus influenzae (strain 86-028NP)</name>
    <dbReference type="NCBI Taxonomy" id="281310"/>
    <lineage>
        <taxon>Bacteria</taxon>
        <taxon>Pseudomonadati</taxon>
        <taxon>Pseudomonadota</taxon>
        <taxon>Gammaproteobacteria</taxon>
        <taxon>Pasteurellales</taxon>
        <taxon>Pasteurellaceae</taxon>
        <taxon>Haemophilus</taxon>
    </lineage>
</organism>